<organism>
    <name type="scientific">Meyerozyma guilliermondii (strain ATCC 6260 / CBS 566 / DSM 6381 / JCM 1539 / NBRC 10279 / NRRL Y-324)</name>
    <name type="common">Yeast</name>
    <name type="synonym">Candida guilliermondii</name>
    <dbReference type="NCBI Taxonomy" id="294746"/>
    <lineage>
        <taxon>Eukaryota</taxon>
        <taxon>Fungi</taxon>
        <taxon>Dikarya</taxon>
        <taxon>Ascomycota</taxon>
        <taxon>Saccharomycotina</taxon>
        <taxon>Pichiomycetes</taxon>
        <taxon>Debaryomycetaceae</taxon>
        <taxon>Meyerozyma</taxon>
    </lineage>
</organism>
<feature type="chain" id="PRO_0000324936" description="Leucine aminopeptidase 2-1">
    <location>
        <begin position="1"/>
        <end position="615"/>
    </location>
</feature>
<feature type="active site" description="Proton acceptor" evidence="3">
    <location>
        <position position="291"/>
    </location>
</feature>
<feature type="active site" description="Proton donor" evidence="3">
    <location>
        <position position="380"/>
    </location>
</feature>
<feature type="binding site" evidence="1">
    <location>
        <begin position="137"/>
        <end position="139"/>
    </location>
    <ligand>
        <name>substrate</name>
    </ligand>
</feature>
<feature type="binding site" evidence="1">
    <location>
        <begin position="261"/>
        <end position="266"/>
    </location>
    <ligand>
        <name>substrate</name>
    </ligand>
</feature>
<feature type="binding site" evidence="3">
    <location>
        <position position="290"/>
    </location>
    <ligand>
        <name>Zn(2+)</name>
        <dbReference type="ChEBI" id="CHEBI:29105"/>
        <note>catalytic</note>
    </ligand>
</feature>
<feature type="binding site" evidence="3">
    <location>
        <position position="294"/>
    </location>
    <ligand>
        <name>Zn(2+)</name>
        <dbReference type="ChEBI" id="CHEBI:29105"/>
        <note>catalytic</note>
    </ligand>
</feature>
<feature type="binding site" evidence="3">
    <location>
        <position position="313"/>
    </location>
    <ligand>
        <name>Zn(2+)</name>
        <dbReference type="ChEBI" id="CHEBI:29105"/>
        <note>catalytic</note>
    </ligand>
</feature>
<gene>
    <name type="ORF">PGUG_04447</name>
</gene>
<comment type="function">
    <text evidence="2">Aminopeptidase that preferentially cleaves di- and tripeptides. Also has low epoxide hydrolase activity (in vitro). Can hydrolyze the epoxide leukotriene LTA(4) but it forms preferentially 5,6-dihydroxy-7,9,11,14-eicosatetraenoic acid rather than the cytokine leukotriene B(4) as the product compared to the homologous mammalian enzyme (in vitro).</text>
</comment>
<comment type="catalytic activity">
    <reaction evidence="2">
        <text>an epoxide + H2O = an ethanediol</text>
        <dbReference type="Rhea" id="RHEA:19037"/>
        <dbReference type="ChEBI" id="CHEBI:15377"/>
        <dbReference type="ChEBI" id="CHEBI:32955"/>
        <dbReference type="ChEBI" id="CHEBI:140594"/>
        <dbReference type="EC" id="3.3.2.10"/>
    </reaction>
</comment>
<comment type="cofactor">
    <cofactor evidence="2">
        <name>Zn(2+)</name>
        <dbReference type="ChEBI" id="CHEBI:29105"/>
    </cofactor>
    <text evidence="2">Binds 1 zinc ion per subunit.</text>
</comment>
<comment type="subcellular location">
    <subcellularLocation>
        <location evidence="2">Cytoplasm</location>
    </subcellularLocation>
    <subcellularLocation>
        <location evidence="2">Nucleus</location>
    </subcellularLocation>
</comment>
<comment type="similarity">
    <text evidence="4">Belongs to the peptidase M1 family.</text>
</comment>
<dbReference type="EC" id="3.4.11.-"/>
<dbReference type="EC" id="3.3.2.10"/>
<dbReference type="EMBL" id="CH408159">
    <property type="protein sequence ID" value="EDK40349.2"/>
    <property type="molecule type" value="Genomic_DNA"/>
</dbReference>
<dbReference type="RefSeq" id="XP_001483718.2">
    <property type="nucleotide sequence ID" value="XM_001483668.1"/>
</dbReference>
<dbReference type="SMR" id="A5DME6"/>
<dbReference type="FunCoup" id="A5DME6">
    <property type="interactions" value="1023"/>
</dbReference>
<dbReference type="STRING" id="294746.A5DME6"/>
<dbReference type="MEROPS" id="M01.034"/>
<dbReference type="GeneID" id="5125528"/>
<dbReference type="KEGG" id="pgu:PGUG_04447"/>
<dbReference type="VEuPathDB" id="FungiDB:PGUG_04447"/>
<dbReference type="eggNOG" id="KOG1047">
    <property type="taxonomic scope" value="Eukaryota"/>
</dbReference>
<dbReference type="HOGENOM" id="CLU_014505_1_1_1"/>
<dbReference type="InParanoid" id="A5DME6"/>
<dbReference type="OMA" id="CTALQWM"/>
<dbReference type="OrthoDB" id="79562at2759"/>
<dbReference type="Proteomes" id="UP000001997">
    <property type="component" value="Unassembled WGS sequence"/>
</dbReference>
<dbReference type="GO" id="GO:0005829">
    <property type="term" value="C:cytosol"/>
    <property type="evidence" value="ECO:0007669"/>
    <property type="project" value="TreeGrafter"/>
</dbReference>
<dbReference type="GO" id="GO:0005634">
    <property type="term" value="C:nucleus"/>
    <property type="evidence" value="ECO:0007669"/>
    <property type="project" value="UniProtKB-SubCell"/>
</dbReference>
<dbReference type="GO" id="GO:0004177">
    <property type="term" value="F:aminopeptidase activity"/>
    <property type="evidence" value="ECO:0000250"/>
    <property type="project" value="UniProtKB"/>
</dbReference>
<dbReference type="GO" id="GO:0004301">
    <property type="term" value="F:epoxide hydrolase activity"/>
    <property type="evidence" value="ECO:0000250"/>
    <property type="project" value="UniProtKB"/>
</dbReference>
<dbReference type="GO" id="GO:0008237">
    <property type="term" value="F:metallopeptidase activity"/>
    <property type="evidence" value="ECO:0007669"/>
    <property type="project" value="UniProtKB-KW"/>
</dbReference>
<dbReference type="GO" id="GO:0008270">
    <property type="term" value="F:zinc ion binding"/>
    <property type="evidence" value="ECO:0000250"/>
    <property type="project" value="UniProtKB"/>
</dbReference>
<dbReference type="GO" id="GO:0043171">
    <property type="term" value="P:peptide catabolic process"/>
    <property type="evidence" value="ECO:0000250"/>
    <property type="project" value="UniProtKB"/>
</dbReference>
<dbReference type="GO" id="GO:0006508">
    <property type="term" value="P:proteolysis"/>
    <property type="evidence" value="ECO:0007669"/>
    <property type="project" value="UniProtKB-KW"/>
</dbReference>
<dbReference type="CDD" id="cd09599">
    <property type="entry name" value="M1_LTA4H"/>
    <property type="match status" value="1"/>
</dbReference>
<dbReference type="FunFam" id="1.10.390.10:FF:000009">
    <property type="entry name" value="Leukotriene A(4) hydrolase"/>
    <property type="match status" value="1"/>
</dbReference>
<dbReference type="FunFam" id="1.25.40.320:FF:000001">
    <property type="entry name" value="Leukotriene A(4) hydrolase"/>
    <property type="match status" value="1"/>
</dbReference>
<dbReference type="FunFam" id="3.30.2010.30:FF:000001">
    <property type="entry name" value="Leukotriene A(4) hydrolase"/>
    <property type="match status" value="1"/>
</dbReference>
<dbReference type="Gene3D" id="3.30.2010.30">
    <property type="match status" value="1"/>
</dbReference>
<dbReference type="Gene3D" id="1.10.390.10">
    <property type="entry name" value="Neutral Protease Domain 2"/>
    <property type="match status" value="1"/>
</dbReference>
<dbReference type="Gene3D" id="1.25.40.320">
    <property type="entry name" value="Peptidase M1, leukotriene A4 hydrolase/aminopeptidase C-terminal domain"/>
    <property type="match status" value="1"/>
</dbReference>
<dbReference type="Gene3D" id="2.60.40.1730">
    <property type="entry name" value="tricorn interacting facor f3 domain"/>
    <property type="match status" value="1"/>
</dbReference>
<dbReference type="InterPro" id="IPR045357">
    <property type="entry name" value="Aminopeptidase_N-like_N"/>
</dbReference>
<dbReference type="InterPro" id="IPR042097">
    <property type="entry name" value="Aminopeptidase_N-like_N_sf"/>
</dbReference>
<dbReference type="InterPro" id="IPR016024">
    <property type="entry name" value="ARM-type_fold"/>
</dbReference>
<dbReference type="InterPro" id="IPR012777">
    <property type="entry name" value="LTA4H"/>
</dbReference>
<dbReference type="InterPro" id="IPR049980">
    <property type="entry name" value="LTA4H_cat"/>
</dbReference>
<dbReference type="InterPro" id="IPR038502">
    <property type="entry name" value="M1_LTA-4_hydro/amino_C_sf"/>
</dbReference>
<dbReference type="InterPro" id="IPR034015">
    <property type="entry name" value="M1_LTA4H"/>
</dbReference>
<dbReference type="InterPro" id="IPR001930">
    <property type="entry name" value="Peptidase_M1"/>
</dbReference>
<dbReference type="InterPro" id="IPR015211">
    <property type="entry name" value="Peptidase_M1_C"/>
</dbReference>
<dbReference type="InterPro" id="IPR014782">
    <property type="entry name" value="Peptidase_M1_dom"/>
</dbReference>
<dbReference type="InterPro" id="IPR027268">
    <property type="entry name" value="Peptidase_M4/M1_CTD_sf"/>
</dbReference>
<dbReference type="NCBIfam" id="TIGR02411">
    <property type="entry name" value="leuko_A4_hydro"/>
    <property type="match status" value="1"/>
</dbReference>
<dbReference type="PANTHER" id="PTHR45726">
    <property type="entry name" value="LEUKOTRIENE A-4 HYDROLASE"/>
    <property type="match status" value="1"/>
</dbReference>
<dbReference type="PANTHER" id="PTHR45726:SF3">
    <property type="entry name" value="LEUKOTRIENE A-4 HYDROLASE"/>
    <property type="match status" value="1"/>
</dbReference>
<dbReference type="Pfam" id="PF09127">
    <property type="entry name" value="Leuk-A4-hydro_C"/>
    <property type="match status" value="1"/>
</dbReference>
<dbReference type="Pfam" id="PF01433">
    <property type="entry name" value="Peptidase_M1"/>
    <property type="match status" value="1"/>
</dbReference>
<dbReference type="Pfam" id="PF17900">
    <property type="entry name" value="Peptidase_M1_N"/>
    <property type="match status" value="1"/>
</dbReference>
<dbReference type="PRINTS" id="PR00756">
    <property type="entry name" value="ALADIPTASE"/>
</dbReference>
<dbReference type="SMART" id="SM01263">
    <property type="entry name" value="Leuk-A4-hydro_C"/>
    <property type="match status" value="1"/>
</dbReference>
<dbReference type="SUPFAM" id="SSF48371">
    <property type="entry name" value="ARM repeat"/>
    <property type="match status" value="1"/>
</dbReference>
<dbReference type="SUPFAM" id="SSF63737">
    <property type="entry name" value="Leukotriene A4 hydrolase N-terminal domain"/>
    <property type="match status" value="1"/>
</dbReference>
<dbReference type="SUPFAM" id="SSF55486">
    <property type="entry name" value="Metalloproteases ('zincins'), catalytic domain"/>
    <property type="match status" value="1"/>
</dbReference>
<dbReference type="PROSITE" id="PS00142">
    <property type="entry name" value="ZINC_PROTEASE"/>
    <property type="match status" value="1"/>
</dbReference>
<keyword id="KW-0963">Cytoplasm</keyword>
<keyword id="KW-0378">Hydrolase</keyword>
<keyword id="KW-0479">Metal-binding</keyword>
<keyword id="KW-0482">Metalloprotease</keyword>
<keyword id="KW-0539">Nucleus</keyword>
<keyword id="KW-0645">Protease</keyword>
<keyword id="KW-1185">Reference proteome</keyword>
<keyword id="KW-0862">Zinc</keyword>
<name>LKA41_PICGU</name>
<sequence length="615" mass="70392">MLRRPKVSPELDPSTLSNYGDFIVHKTQLDLAVDFDKNRVSSCVSLNVTNRTNTHQVVLDSSYLVIHSASINGISTPFDVAERQTLGSKVTIKIPPEMKISELTITIESETTYECTALQFLPAEATDGGVGPYLFSQCQAIHARSLFPCFDTPAVKCPYEMSVTSPYPSVMSGRPLGVSGNMYRFSQPVPIPSYLVAVASGDIKSAPIGPRSSVYCEPLKLEVCQHEFQADMEHFLQAAESLVFKYEWERYDALVLPSSFPYGGMENPNITFVTPTLISGDRENVDVIAHELAHSWSGNLVTNCSWEHFWLNEGWTVYLERRILGKLHGNATRDFSAIIGWTDLENSIAAMGPSAERWSMLVHNLKDGSDPDDAFSTVPYEKGSTLLYHIETLIGQEKFDKFIPHYFHTFRYKSLDTYQFIDCLYSFFADFKSVLDTIDWESWLYKPGMPPVKPDFDTSMVDQCYQLADKWYHHSLKNKFHKFSSEDIKSFTANQSVVFLDTLIAFDKLDFKWKHHLDALNTMASVYQEYSKSTNAEVLFRWYVLQVTGHNQEYYSRLGEWLGTVGRMKFVRPGYVLLNKVDRSMALHYFEKFHNRYHAICKSMVRRDWDLIKTK</sequence>
<evidence type="ECO:0000250" key="1"/>
<evidence type="ECO:0000250" key="2">
    <source>
        <dbReference type="UniProtKB" id="Q10740"/>
    </source>
</evidence>
<evidence type="ECO:0000255" key="3">
    <source>
        <dbReference type="PROSITE-ProRule" id="PRU10095"/>
    </source>
</evidence>
<evidence type="ECO:0000305" key="4"/>
<reference key="1">
    <citation type="journal article" date="2009" name="Nature">
        <title>Evolution of pathogenicity and sexual reproduction in eight Candida genomes.</title>
        <authorList>
            <person name="Butler G."/>
            <person name="Rasmussen M.D."/>
            <person name="Lin M.F."/>
            <person name="Santos M.A.S."/>
            <person name="Sakthikumar S."/>
            <person name="Munro C.A."/>
            <person name="Rheinbay E."/>
            <person name="Grabherr M."/>
            <person name="Forche A."/>
            <person name="Reedy J.L."/>
            <person name="Agrafioti I."/>
            <person name="Arnaud M.B."/>
            <person name="Bates S."/>
            <person name="Brown A.J.P."/>
            <person name="Brunke S."/>
            <person name="Costanzo M.C."/>
            <person name="Fitzpatrick D.A."/>
            <person name="de Groot P.W.J."/>
            <person name="Harris D."/>
            <person name="Hoyer L.L."/>
            <person name="Hube B."/>
            <person name="Klis F.M."/>
            <person name="Kodira C."/>
            <person name="Lennard N."/>
            <person name="Logue M.E."/>
            <person name="Martin R."/>
            <person name="Neiman A.M."/>
            <person name="Nikolaou E."/>
            <person name="Quail M.A."/>
            <person name="Quinn J."/>
            <person name="Santos M.C."/>
            <person name="Schmitzberger F.F."/>
            <person name="Sherlock G."/>
            <person name="Shah P."/>
            <person name="Silverstein K.A.T."/>
            <person name="Skrzypek M.S."/>
            <person name="Soll D."/>
            <person name="Staggs R."/>
            <person name="Stansfield I."/>
            <person name="Stumpf M.P.H."/>
            <person name="Sudbery P.E."/>
            <person name="Srikantha T."/>
            <person name="Zeng Q."/>
            <person name="Berman J."/>
            <person name="Berriman M."/>
            <person name="Heitman J."/>
            <person name="Gow N.A.R."/>
            <person name="Lorenz M.C."/>
            <person name="Birren B.W."/>
            <person name="Kellis M."/>
            <person name="Cuomo C.A."/>
        </authorList>
    </citation>
    <scope>NUCLEOTIDE SEQUENCE [LARGE SCALE GENOMIC DNA]</scope>
    <source>
        <strain>ATCC 6260 / CBS 566 / DSM 6381 / JCM 1539 / NBRC 10279 / NRRL Y-324</strain>
    </source>
</reference>
<proteinExistence type="inferred from homology"/>
<accession>A5DME6</accession>
<protein>
    <recommendedName>
        <fullName>Leucine aminopeptidase 2-1</fullName>
        <ecNumber>3.4.11.-</ecNumber>
    </recommendedName>
    <alternativeName>
        <fullName>Epoxide hydrolase</fullName>
        <ecNumber>3.3.2.10</ecNumber>
    </alternativeName>
    <alternativeName>
        <fullName>Leukotriene A-4 hydrolase homolog 1</fullName>
        <shortName>LTA-4 hydrolase 1</shortName>
    </alternativeName>
</protein>